<dbReference type="EC" id="7.1.1.9"/>
<dbReference type="EMBL" id="AF147594">
    <property type="protein sequence ID" value="AAG42587.1"/>
    <property type="molecule type" value="Genomic_DNA"/>
</dbReference>
<dbReference type="EMBL" id="AF147595">
    <property type="protein sequence ID" value="AAG42588.1"/>
    <property type="molecule type" value="Genomic_DNA"/>
</dbReference>
<dbReference type="RefSeq" id="YP_009332065.1">
    <property type="nucleotide sequence ID" value="NC_032373.1"/>
</dbReference>
<dbReference type="SMR" id="Q7IZ11"/>
<dbReference type="GeneID" id="30688908"/>
<dbReference type="CTD" id="4513"/>
<dbReference type="GO" id="GO:0005743">
    <property type="term" value="C:mitochondrial inner membrane"/>
    <property type="evidence" value="ECO:0007669"/>
    <property type="project" value="UniProtKB-SubCell"/>
</dbReference>
<dbReference type="GO" id="GO:0045277">
    <property type="term" value="C:respiratory chain complex IV"/>
    <property type="evidence" value="ECO:0000250"/>
    <property type="project" value="UniProtKB"/>
</dbReference>
<dbReference type="GO" id="GO:0005507">
    <property type="term" value="F:copper ion binding"/>
    <property type="evidence" value="ECO:0007669"/>
    <property type="project" value="InterPro"/>
</dbReference>
<dbReference type="GO" id="GO:0004129">
    <property type="term" value="F:cytochrome-c oxidase activity"/>
    <property type="evidence" value="ECO:0007669"/>
    <property type="project" value="UniProtKB-EC"/>
</dbReference>
<dbReference type="GO" id="GO:0042773">
    <property type="term" value="P:ATP synthesis coupled electron transport"/>
    <property type="evidence" value="ECO:0007669"/>
    <property type="project" value="TreeGrafter"/>
</dbReference>
<dbReference type="CDD" id="cd13912">
    <property type="entry name" value="CcO_II_C"/>
    <property type="match status" value="1"/>
</dbReference>
<dbReference type="FunFam" id="1.10.287.90:FF:000001">
    <property type="entry name" value="Cytochrome c oxidase subunit 2"/>
    <property type="match status" value="1"/>
</dbReference>
<dbReference type="FunFam" id="2.60.40.420:FF:000001">
    <property type="entry name" value="Cytochrome c oxidase subunit 2"/>
    <property type="match status" value="1"/>
</dbReference>
<dbReference type="Gene3D" id="1.10.287.90">
    <property type="match status" value="1"/>
</dbReference>
<dbReference type="Gene3D" id="2.60.40.420">
    <property type="entry name" value="Cupredoxins - blue copper proteins"/>
    <property type="match status" value="1"/>
</dbReference>
<dbReference type="InterPro" id="IPR045187">
    <property type="entry name" value="CcO_II"/>
</dbReference>
<dbReference type="InterPro" id="IPR002429">
    <property type="entry name" value="CcO_II-like_C"/>
</dbReference>
<dbReference type="InterPro" id="IPR034210">
    <property type="entry name" value="CcO_II_C"/>
</dbReference>
<dbReference type="InterPro" id="IPR001505">
    <property type="entry name" value="Copper_CuA"/>
</dbReference>
<dbReference type="InterPro" id="IPR008972">
    <property type="entry name" value="Cupredoxin"/>
</dbReference>
<dbReference type="InterPro" id="IPR014222">
    <property type="entry name" value="Cyt_c_oxidase_su2"/>
</dbReference>
<dbReference type="InterPro" id="IPR011759">
    <property type="entry name" value="Cyt_c_oxidase_su2_TM_dom"/>
</dbReference>
<dbReference type="InterPro" id="IPR036257">
    <property type="entry name" value="Cyt_c_oxidase_su2_TM_sf"/>
</dbReference>
<dbReference type="NCBIfam" id="TIGR02866">
    <property type="entry name" value="CoxB"/>
    <property type="match status" value="1"/>
</dbReference>
<dbReference type="PANTHER" id="PTHR22888:SF9">
    <property type="entry name" value="CYTOCHROME C OXIDASE SUBUNIT 2"/>
    <property type="match status" value="1"/>
</dbReference>
<dbReference type="PANTHER" id="PTHR22888">
    <property type="entry name" value="CYTOCHROME C OXIDASE, SUBUNIT II"/>
    <property type="match status" value="1"/>
</dbReference>
<dbReference type="Pfam" id="PF00116">
    <property type="entry name" value="COX2"/>
    <property type="match status" value="1"/>
</dbReference>
<dbReference type="Pfam" id="PF02790">
    <property type="entry name" value="COX2_TM"/>
    <property type="match status" value="1"/>
</dbReference>
<dbReference type="PRINTS" id="PR01166">
    <property type="entry name" value="CYCOXIDASEII"/>
</dbReference>
<dbReference type="SUPFAM" id="SSF49503">
    <property type="entry name" value="Cupredoxins"/>
    <property type="match status" value="1"/>
</dbReference>
<dbReference type="SUPFAM" id="SSF81464">
    <property type="entry name" value="Cytochrome c oxidase subunit II-like, transmembrane region"/>
    <property type="match status" value="1"/>
</dbReference>
<dbReference type="PROSITE" id="PS00078">
    <property type="entry name" value="COX2"/>
    <property type="match status" value="1"/>
</dbReference>
<dbReference type="PROSITE" id="PS50857">
    <property type="entry name" value="COX2_CUA"/>
    <property type="match status" value="1"/>
</dbReference>
<dbReference type="PROSITE" id="PS50999">
    <property type="entry name" value="COX2_TM"/>
    <property type="match status" value="1"/>
</dbReference>
<organism>
    <name type="scientific">Tamias dorsalis</name>
    <name type="common">Cliff chipmunk</name>
    <name type="synonym">Eutamias dorsalis</name>
    <dbReference type="NCBI Taxonomy" id="45467"/>
    <lineage>
        <taxon>Eukaryota</taxon>
        <taxon>Metazoa</taxon>
        <taxon>Chordata</taxon>
        <taxon>Craniata</taxon>
        <taxon>Vertebrata</taxon>
        <taxon>Euteleostomi</taxon>
        <taxon>Mammalia</taxon>
        <taxon>Eutheria</taxon>
        <taxon>Euarchontoglires</taxon>
        <taxon>Glires</taxon>
        <taxon>Rodentia</taxon>
        <taxon>Sciuromorpha</taxon>
        <taxon>Sciuridae</taxon>
        <taxon>Xerinae</taxon>
        <taxon>Marmotini</taxon>
        <taxon>Tamias</taxon>
    </lineage>
</organism>
<sequence>MAYPFELGFQDATSPIMEELLHFHDHTLMIVFLISSLVLYIISLMLTTKLTHTSTMDAQEVETIWTILPAIILILIALPSLRILYMMDEINDPSLTVKTMGHQWYWSYEYTDYEDLNFDSYMIPTSDLSPGELRLLEVDNRVVLPMELPIRMLISSEDVLHSWAVPSLGLKTDAIPGRLNQATLTSTRPGLYYGQCSEICGSNHSFMPIVLELVPLKHFENWSSSML</sequence>
<name>COX2_TAMDO</name>
<keyword id="KW-0186">Copper</keyword>
<keyword id="KW-0249">Electron transport</keyword>
<keyword id="KW-0460">Magnesium</keyword>
<keyword id="KW-0472">Membrane</keyword>
<keyword id="KW-0479">Metal-binding</keyword>
<keyword id="KW-0496">Mitochondrion</keyword>
<keyword id="KW-0999">Mitochondrion inner membrane</keyword>
<keyword id="KW-0679">Respiratory chain</keyword>
<keyword id="KW-1278">Translocase</keyword>
<keyword id="KW-0812">Transmembrane</keyword>
<keyword id="KW-1133">Transmembrane helix</keyword>
<keyword id="KW-0813">Transport</keyword>
<gene>
    <name type="primary">MT-CO2</name>
    <name type="synonym">COII</name>
    <name type="synonym">COX2</name>
    <name type="synonym">COXII</name>
    <name type="synonym">MTCO2</name>
</gene>
<accession>Q7IZ11</accession>
<geneLocation type="mitochondrion"/>
<comment type="function">
    <text evidence="2">Component of the cytochrome c oxidase, the last enzyme in the mitochondrial electron transport chain which drives oxidative phosphorylation. The respiratory chain contains 3 multisubunit complexes succinate dehydrogenase (complex II, CII), ubiquinol-cytochrome c oxidoreductase (cytochrome b-c1 complex, complex III, CIII) and cytochrome c oxidase (complex IV, CIV), that cooperate to transfer electrons derived from NADH and succinate to molecular oxygen, creating an electrochemical gradient over the inner membrane that drives transmembrane transport and the ATP synthase. Cytochrome c oxidase is the component of the respiratory chain that catalyzes the reduction of oxygen to water. Electrons originating from reduced cytochrome c in the intermembrane space (IMS) are transferred via the dinuclear copper A center (CU(A)) of subunit 2 and heme A of subunit 1 to the active site in subunit 1, a binuclear center (BNC) formed by heme A3 and copper B (CU(B)). The BNC reduces molecular oxygen to 2 water molecules using 4 electrons from cytochrome c in the IMS and 4 protons from the mitochondrial matrix.</text>
</comment>
<comment type="catalytic activity">
    <reaction evidence="2">
        <text>4 Fe(II)-[cytochrome c] + O2 + 8 H(+)(in) = 4 Fe(III)-[cytochrome c] + 2 H2O + 4 H(+)(out)</text>
        <dbReference type="Rhea" id="RHEA:11436"/>
        <dbReference type="Rhea" id="RHEA-COMP:10350"/>
        <dbReference type="Rhea" id="RHEA-COMP:14399"/>
        <dbReference type="ChEBI" id="CHEBI:15377"/>
        <dbReference type="ChEBI" id="CHEBI:15378"/>
        <dbReference type="ChEBI" id="CHEBI:15379"/>
        <dbReference type="ChEBI" id="CHEBI:29033"/>
        <dbReference type="ChEBI" id="CHEBI:29034"/>
        <dbReference type="EC" id="7.1.1.9"/>
    </reaction>
    <physiologicalReaction direction="left-to-right" evidence="2">
        <dbReference type="Rhea" id="RHEA:11437"/>
    </physiologicalReaction>
</comment>
<comment type="cofactor">
    <cofactor evidence="3">
        <name>Cu cation</name>
        <dbReference type="ChEBI" id="CHEBI:23378"/>
    </cofactor>
    <text evidence="3">Binds a dinuclear copper A center per subunit.</text>
</comment>
<comment type="subunit">
    <text evidence="1 3">Component of the cytochrome c oxidase (complex IV, CIV), a multisubunit enzyme composed of 14 subunits. The complex is composed of a catalytic core of 3 subunits MT-CO1, MT-CO2 and MT-CO3, encoded in the mitochondrial DNA, and 11 supernumerary subunits COX4I, COX5A, COX5B, COX6A, COX6B, COX6C, COX7A, COX7B, COX7C, COX8 and NDUFA4, which are encoded in the nuclear genome. The complex exists as a monomer or a dimer and forms supercomplexes (SCs) in the inner mitochondrial membrane with NADH-ubiquinone oxidoreductase (complex I, CI) and ubiquinol-cytochrome c oxidoreductase (cytochrome b-c1 complex, complex III, CIII), resulting in different assemblies (supercomplex SCI(1)III(2)IV(1) and megacomplex MCI(2)III(2)IV(2)) (By similarity). Found in a complex with TMEM177, COA6, COX18, COX20, SCO1 and SCO2. Interacts with TMEM177 in a COX20-dependent manner. Interacts with COX20. Interacts with COX16 (By similarity).</text>
</comment>
<comment type="subcellular location">
    <subcellularLocation>
        <location evidence="3">Mitochondrion inner membrane</location>
        <topology evidence="3">Multi-pass membrane protein</topology>
    </subcellularLocation>
</comment>
<comment type="similarity">
    <text evidence="4">Belongs to the cytochrome c oxidase subunit 2 family.</text>
</comment>
<proteinExistence type="inferred from homology"/>
<feature type="chain" id="PRO_0000257855" description="Cytochrome c oxidase subunit 2">
    <location>
        <begin position="1"/>
        <end position="227"/>
    </location>
</feature>
<feature type="topological domain" description="Mitochondrial intermembrane" evidence="3">
    <location>
        <begin position="1"/>
        <end position="14"/>
    </location>
</feature>
<feature type="transmembrane region" description="Helical; Name=I" evidence="3">
    <location>
        <begin position="15"/>
        <end position="45"/>
    </location>
</feature>
<feature type="topological domain" description="Mitochondrial matrix" evidence="3">
    <location>
        <begin position="46"/>
        <end position="59"/>
    </location>
</feature>
<feature type="transmembrane region" description="Helical; Name=II" evidence="3">
    <location>
        <begin position="60"/>
        <end position="87"/>
    </location>
</feature>
<feature type="topological domain" description="Mitochondrial intermembrane" evidence="3">
    <location>
        <begin position="88"/>
        <end position="227"/>
    </location>
</feature>
<feature type="binding site" evidence="3">
    <location>
        <position position="161"/>
    </location>
    <ligand>
        <name>Cu cation</name>
        <dbReference type="ChEBI" id="CHEBI:23378"/>
        <label>A1</label>
    </ligand>
</feature>
<feature type="binding site" evidence="3">
    <location>
        <position position="196"/>
    </location>
    <ligand>
        <name>Cu cation</name>
        <dbReference type="ChEBI" id="CHEBI:23378"/>
        <label>A1</label>
    </ligand>
</feature>
<feature type="binding site" evidence="3">
    <location>
        <position position="196"/>
    </location>
    <ligand>
        <name>Cu cation</name>
        <dbReference type="ChEBI" id="CHEBI:23378"/>
        <label>A2</label>
    </ligand>
</feature>
<feature type="binding site" evidence="3">
    <location>
        <position position="198"/>
    </location>
    <ligand>
        <name>Cu cation</name>
        <dbReference type="ChEBI" id="CHEBI:23378"/>
        <label>A2</label>
    </ligand>
</feature>
<feature type="binding site" evidence="3">
    <location>
        <position position="198"/>
    </location>
    <ligand>
        <name>Mg(2+)</name>
        <dbReference type="ChEBI" id="CHEBI:18420"/>
        <note>ligand shared with MT-CO1</note>
    </ligand>
</feature>
<feature type="binding site" evidence="3">
    <location>
        <position position="200"/>
    </location>
    <ligand>
        <name>Cu cation</name>
        <dbReference type="ChEBI" id="CHEBI:23378"/>
        <label>A1</label>
    </ligand>
</feature>
<feature type="binding site" evidence="3">
    <location>
        <position position="200"/>
    </location>
    <ligand>
        <name>Cu cation</name>
        <dbReference type="ChEBI" id="CHEBI:23378"/>
        <label>A2</label>
    </ligand>
</feature>
<feature type="binding site" evidence="3">
    <location>
        <position position="204"/>
    </location>
    <ligand>
        <name>Cu cation</name>
        <dbReference type="ChEBI" id="CHEBI:23378"/>
        <label>A2</label>
    </ligand>
</feature>
<feature type="binding site" evidence="3">
    <location>
        <position position="207"/>
    </location>
    <ligand>
        <name>Cu cation</name>
        <dbReference type="ChEBI" id="CHEBI:23378"/>
        <label>A1</label>
    </ligand>
</feature>
<protein>
    <recommendedName>
        <fullName>Cytochrome c oxidase subunit 2</fullName>
        <ecNumber>7.1.1.9</ecNumber>
    </recommendedName>
    <alternativeName>
        <fullName>Cytochrome c oxidase polypeptide II</fullName>
    </alternativeName>
</protein>
<evidence type="ECO:0000250" key="1">
    <source>
        <dbReference type="UniProtKB" id="P00403"/>
    </source>
</evidence>
<evidence type="ECO:0000250" key="2">
    <source>
        <dbReference type="UniProtKB" id="P00410"/>
    </source>
</evidence>
<evidence type="ECO:0000250" key="3">
    <source>
        <dbReference type="UniProtKB" id="P68530"/>
    </source>
</evidence>
<evidence type="ECO:0000305" key="4"/>
<reference key="1">
    <citation type="journal article" date="2000" name="J. Mammal. Evol.">
        <title>Molecular phylogeny of the chipmunk genus Tamias based on the mitochondrial cytochrome oxidase subunit II gene.</title>
        <authorList>
            <person name="Piaggio A.J."/>
            <person name="Spicer G.S."/>
        </authorList>
    </citation>
    <scope>NUCLEOTIDE SEQUENCE [GENOMIC DNA]</scope>
</reference>